<reference key="1">
    <citation type="journal article" date="2005" name="Biochimie">
        <title>Natterins, a new class of proteins with kininogenase activity characterized from Thalassophryne nattereri fish venom.</title>
        <authorList>
            <person name="Magalhaes G.S."/>
            <person name="Lopes-Ferreira M."/>
            <person name="Junqueira-de-Azevedo I.L.M."/>
            <person name="Spencer P.J."/>
            <person name="Araujo M.S."/>
            <person name="Portaro F.C.V."/>
            <person name="Ma L."/>
            <person name="Valente R.H."/>
            <person name="Juliano L."/>
            <person name="Fox J.W."/>
            <person name="Ho P.L."/>
            <person name="Moura-da-Silva A.M."/>
        </authorList>
    </citation>
    <scope>NUCLEOTIDE SEQUENCE [MRNA]</scope>
    <source>
        <tissue>Venom gland</tissue>
    </source>
</reference>
<name>NATTP_THANI</name>
<proteinExistence type="inferred from homology"/>
<organism>
    <name type="scientific">Thalassophryne nattereri</name>
    <name type="common">Copper Joe toadfish</name>
    <dbReference type="NCBI Taxonomy" id="289382"/>
    <lineage>
        <taxon>Eukaryota</taxon>
        <taxon>Metazoa</taxon>
        <taxon>Chordata</taxon>
        <taxon>Craniata</taxon>
        <taxon>Vertebrata</taxon>
        <taxon>Euteleostomi</taxon>
        <taxon>Actinopterygii</taxon>
        <taxon>Neopterygii</taxon>
        <taxon>Teleostei</taxon>
        <taxon>Neoteleostei</taxon>
        <taxon>Acanthomorphata</taxon>
        <taxon>Batrachoidaria</taxon>
        <taxon>Batrachoididae</taxon>
        <taxon>Thalassophryne</taxon>
    </lineage>
</organism>
<accession>Q66S08</accession>
<comment type="function">
    <text evidence="2">Shows nociceptive, edema-inducing and kininogenase activity with release of kallidin from low molecular weight kininogen. The cleavage occurs at Met-Lys bonds.</text>
</comment>
<comment type="activity regulation">
    <text evidence="2">Inhibited by tissue-kallikrein inhibitor TKI and trasylol. Plasma kallikrein inhibitor PKSI527 and classical inhibitors of serine-, metallo-, thiol- or aspartate-peptidases evokes a minor inhibition of the peptide digestion.</text>
</comment>
<comment type="subcellular location">
    <subcellularLocation>
        <location evidence="6">Secreted</location>
    </subcellularLocation>
</comment>
<comment type="tissue specificity">
    <text evidence="6">Expressed by the venom gland.</text>
</comment>
<comment type="similarity">
    <text evidence="5">Belongs to the natterin family.</text>
</comment>
<dbReference type="EC" id="3.4.-.-"/>
<dbReference type="EMBL" id="AY707912">
    <property type="protein sequence ID" value="AAU11826.1"/>
    <property type="molecule type" value="mRNA"/>
</dbReference>
<dbReference type="GO" id="GO:0005576">
    <property type="term" value="C:extracellular region"/>
    <property type="evidence" value="ECO:0007669"/>
    <property type="project" value="UniProtKB-SubCell"/>
</dbReference>
<dbReference type="GO" id="GO:0016787">
    <property type="term" value="F:hydrolase activity"/>
    <property type="evidence" value="ECO:0007669"/>
    <property type="project" value="UniProtKB-KW"/>
</dbReference>
<dbReference type="GO" id="GO:0090729">
    <property type="term" value="F:toxin activity"/>
    <property type="evidence" value="ECO:0007669"/>
    <property type="project" value="UniProtKB-KW"/>
</dbReference>
<evidence type="ECO:0000250" key="1"/>
<evidence type="ECO:0000250" key="2">
    <source>
        <dbReference type="UniProtKB" id="Q66S25"/>
    </source>
</evidence>
<evidence type="ECO:0000255" key="3"/>
<evidence type="ECO:0000256" key="4">
    <source>
        <dbReference type="SAM" id="MobiDB-lite"/>
    </source>
</evidence>
<evidence type="ECO:0000305" key="5"/>
<evidence type="ECO:0000305" key="6">
    <source>
    </source>
</evidence>
<keyword id="KW-1015">Disulfide bond</keyword>
<keyword id="KW-0378">Hydrolase</keyword>
<keyword id="KW-0964">Secreted</keyword>
<keyword id="KW-0732">Signal</keyword>
<keyword id="KW-0800">Toxin</keyword>
<protein>
    <recommendedName>
        <fullName>Natterin-P</fullName>
        <ecNumber>3.4.-.-</ecNumber>
    </recommendedName>
</protein>
<sequence length="71" mass="7890">MKLLVLLVTLLVLSWTSAEDLGDQEILENNEDNNHESELGEPAAQHTDDETSQLGQALIPRCRKMPGVKMC</sequence>
<feature type="signal peptide" evidence="3">
    <location>
        <begin position="1"/>
        <end position="18"/>
    </location>
</feature>
<feature type="propeptide" id="PRO_0000285221" evidence="1">
    <location>
        <begin position="19"/>
        <end position="45"/>
    </location>
</feature>
<feature type="peptide" id="PRO_5000093999" description="Natterin-P">
    <location>
        <begin position="46"/>
        <end position="71"/>
    </location>
</feature>
<feature type="region of interest" description="Disordered" evidence="4">
    <location>
        <begin position="22"/>
        <end position="54"/>
    </location>
</feature>
<feature type="compositionally biased region" description="Acidic residues" evidence="4">
    <location>
        <begin position="22"/>
        <end position="31"/>
    </location>
</feature>
<feature type="disulfide bond" evidence="5">
    <location>
        <begin position="62"/>
        <end position="71"/>
    </location>
</feature>